<reference key="1">
    <citation type="journal article" date="2004" name="Nucleic Acids Res.">
        <title>The genome sequence of Bacillus cereus ATCC 10987 reveals metabolic adaptations and a large plasmid related to Bacillus anthracis pXO1.</title>
        <authorList>
            <person name="Rasko D.A."/>
            <person name="Ravel J."/>
            <person name="Oekstad O.A."/>
            <person name="Helgason E."/>
            <person name="Cer R.Z."/>
            <person name="Jiang L."/>
            <person name="Shores K.A."/>
            <person name="Fouts D.E."/>
            <person name="Tourasse N.J."/>
            <person name="Angiuoli S.V."/>
            <person name="Kolonay J.F."/>
            <person name="Nelson W.C."/>
            <person name="Kolstoe A.-B."/>
            <person name="Fraser C.M."/>
            <person name="Read T.D."/>
        </authorList>
    </citation>
    <scope>NUCLEOTIDE SEQUENCE [LARGE SCALE GENOMIC DNA]</scope>
    <source>
        <strain>ATCC 10987 / NRS 248</strain>
    </source>
</reference>
<evidence type="ECO:0000255" key="1">
    <source>
        <dbReference type="HAMAP-Rule" id="MF_00506"/>
    </source>
</evidence>
<dbReference type="EMBL" id="AE017194">
    <property type="protein sequence ID" value="AAS40442.1"/>
    <property type="molecule type" value="Genomic_DNA"/>
</dbReference>
<dbReference type="KEGG" id="bca:BCE_1513"/>
<dbReference type="HOGENOM" id="CLU_187365_0_0_9"/>
<dbReference type="Proteomes" id="UP000002527">
    <property type="component" value="Chromosome"/>
</dbReference>
<dbReference type="HAMAP" id="MF_00506">
    <property type="entry name" value="UPF0180"/>
    <property type="match status" value="1"/>
</dbReference>
<dbReference type="InterPro" id="IPR005370">
    <property type="entry name" value="UPF0180"/>
</dbReference>
<dbReference type="NCBIfam" id="NF002845">
    <property type="entry name" value="PRK03094.1"/>
    <property type="match status" value="1"/>
</dbReference>
<dbReference type="Pfam" id="PF03698">
    <property type="entry name" value="UPF0180"/>
    <property type="match status" value="1"/>
</dbReference>
<feature type="chain" id="PRO_0000172736" description="UPF0180 protein BCE_1513">
    <location>
        <begin position="1"/>
        <end position="79"/>
    </location>
</feature>
<sequence length="79" mass="8402">MAKIGVENSLTDVQQALQQQGHEVVTINSEHDAQGCDCCVVTGQDSNMMGIADTSIKGSVINAHGLTTDEICQQVESRI</sequence>
<protein>
    <recommendedName>
        <fullName evidence="1">UPF0180 protein BCE_1513</fullName>
    </recommendedName>
</protein>
<organism>
    <name type="scientific">Bacillus cereus (strain ATCC 10987 / NRS 248)</name>
    <dbReference type="NCBI Taxonomy" id="222523"/>
    <lineage>
        <taxon>Bacteria</taxon>
        <taxon>Bacillati</taxon>
        <taxon>Bacillota</taxon>
        <taxon>Bacilli</taxon>
        <taxon>Bacillales</taxon>
        <taxon>Bacillaceae</taxon>
        <taxon>Bacillus</taxon>
        <taxon>Bacillus cereus group</taxon>
    </lineage>
</organism>
<accession>Q73BA6</accession>
<proteinExistence type="inferred from homology"/>
<gene>
    <name type="ordered locus">BCE_1513</name>
</gene>
<comment type="similarity">
    <text evidence="1">Belongs to the UPF0180 family.</text>
</comment>
<name>Y1513_BACC1</name>